<organismHost>
    <name type="scientific">Canis lupus familiaris</name>
    <name type="common">Dog</name>
    <name type="synonym">Canis familiaris</name>
    <dbReference type="NCBI Taxonomy" id="9615"/>
</organismHost>
<protein>
    <recommendedName>
        <fullName>Non-structural protein 7a</fullName>
        <shortName>ns7a</shortName>
    </recommendedName>
    <alternativeName>
        <fullName>11 kDa protein</fullName>
    </alternativeName>
    <alternativeName>
        <fullName>Accessory protein 7a</fullName>
    </alternativeName>
    <alternativeName>
        <fullName>X3 protein</fullName>
    </alternativeName>
</protein>
<organism>
    <name type="scientific">Canine coronavirus (strain K378)</name>
    <name type="common">CCoV</name>
    <name type="synonym">Canine enteric coronavirus</name>
    <dbReference type="NCBI Taxonomy" id="33732"/>
    <lineage>
        <taxon>Viruses</taxon>
        <taxon>Riboviria</taxon>
        <taxon>Orthornavirae</taxon>
        <taxon>Pisuviricota</taxon>
        <taxon>Pisoniviricetes</taxon>
        <taxon>Nidovirales</taxon>
        <taxon>Cornidovirineae</taxon>
        <taxon>Coronaviridae</taxon>
        <taxon>Orthocoronavirinae</taxon>
        <taxon>Alphacoronavirus</taxon>
        <taxon>Tegacovirus</taxon>
        <taxon>Alphacoronavirus 1</taxon>
    </lineage>
</organism>
<comment type="function">
    <text>May function in the formation of membrane-bound replication complexes or in the assembly of the virus.</text>
</comment>
<comment type="subcellular location">
    <subcellularLocation>
        <location evidence="2">Host membrane</location>
        <topology evidence="2">Single-pass membrane protein</topology>
    </subcellularLocation>
</comment>
<comment type="similarity">
    <text evidence="2">Belongs to the coronaviruses ns7/ns7a protein family.</text>
</comment>
<proteinExistence type="inferred from homology"/>
<accession>Q04703</accession>
<name>NS7_CVCAK</name>
<keyword id="KW-1043">Host membrane</keyword>
<keyword id="KW-0472">Membrane</keyword>
<keyword id="KW-0732">Signal</keyword>
<keyword id="KW-0812">Transmembrane</keyword>
<keyword id="KW-1133">Transmembrane helix</keyword>
<reference key="1">
    <citation type="journal article" date="1992" name="Virology">
        <title>Genomic organization and expression of the 3' end of the canine and feline enteric coronaviruses.</title>
        <authorList>
            <person name="Vennema H."/>
            <person name="Rossen J.W.A."/>
            <person name="Wesseling J."/>
            <person name="Horzinek M.C."/>
            <person name="Rottier P.J.M."/>
        </authorList>
    </citation>
    <scope>NUCLEOTIDE SEQUENCE [GENOMIC RNA]</scope>
</reference>
<feature type="signal peptide" evidence="1">
    <location>
        <begin position="1"/>
        <end position="23"/>
    </location>
</feature>
<feature type="chain" id="PRO_0000106094" description="Non-structural protein 7a">
    <location>
        <begin position="24"/>
        <end position="101"/>
    </location>
</feature>
<feature type="transmembrane region" description="Helical" evidence="1">
    <location>
        <begin position="81"/>
        <end position="101"/>
    </location>
</feature>
<evidence type="ECO:0000255" key="1"/>
<evidence type="ECO:0000305" key="2"/>
<gene>
    <name type="ORF">7a</name>
</gene>
<sequence length="101" mass="11491">MLVFLHAVFITVLILLLIGRLQLLERLLLNHSLNLKTVNNVLGVTDTGLKVNCLQLLKPDCLDFNILHRSLAETRLLKVVLRVIFLVLLGFCCYRLLVTLI</sequence>
<dbReference type="EMBL" id="X66717">
    <property type="protein sequence ID" value="CAA47247.1"/>
    <property type="molecule type" value="Genomic_RNA"/>
</dbReference>
<dbReference type="PIR" id="B44056">
    <property type="entry name" value="B44056"/>
</dbReference>
<dbReference type="GO" id="GO:0033644">
    <property type="term" value="C:host cell membrane"/>
    <property type="evidence" value="ECO:0007669"/>
    <property type="project" value="UniProtKB-SubCell"/>
</dbReference>
<dbReference type="GO" id="GO:0016020">
    <property type="term" value="C:membrane"/>
    <property type="evidence" value="ECO:0007669"/>
    <property type="project" value="UniProtKB-KW"/>
</dbReference>
<dbReference type="InterPro" id="IPR003449">
    <property type="entry name" value="Corona_7"/>
</dbReference>
<dbReference type="Pfam" id="PF02398">
    <property type="entry name" value="Corona_7"/>
    <property type="match status" value="1"/>
</dbReference>